<name>GLMM_BACCQ</name>
<accession>B9J0F1</accession>
<protein>
    <recommendedName>
        <fullName evidence="1">Phosphoglucosamine mutase</fullName>
        <ecNumber evidence="1">5.4.2.10</ecNumber>
    </recommendedName>
</protein>
<gene>
    <name evidence="1" type="primary">glmM</name>
    <name type="ordered locus">BCQ_0182</name>
</gene>
<organism>
    <name type="scientific">Bacillus cereus (strain Q1)</name>
    <dbReference type="NCBI Taxonomy" id="361100"/>
    <lineage>
        <taxon>Bacteria</taxon>
        <taxon>Bacillati</taxon>
        <taxon>Bacillota</taxon>
        <taxon>Bacilli</taxon>
        <taxon>Bacillales</taxon>
        <taxon>Bacillaceae</taxon>
        <taxon>Bacillus</taxon>
        <taxon>Bacillus cereus group</taxon>
    </lineage>
</organism>
<sequence length="448" mass="48417">MGKYFGTDGVRGVANKELTPELAFKIGRFGGYVLTKDTDRPKVIIGRDTRISGHMLEGALVAGLLSTGAEVMRLGVISTPGVAYLTKALDAQAGVMISASHNPVQDNGIKFFGSDGFKLTDEQEAEIEALLDKEVDELPRPTGTNLGQVSDYFEGGQKYLQYIKQTVEEDFSGLHIALDCAHGATSSLAPYLFADLEADISTMGTSPNGMNINDGVGSTHPEVLAELVKEKGADIGLAFDGDGDRLIAVDEKGNIVDGDQIMFICAKYMKETGQLKHNTVVSTVMSNLGFYKALEANGITSDKTAVGDRYVMEEMKRGGYNLGGEQSGHIILLDYITTGDGMLSALQLVNIMKMTKKPLSELAGEMTKFPQLLVNVRVTDKKLALENEKIKEIIRVVEEEMNGDGRILVRPSGTEPLIRVMAEAPTQEVCDAYVHRIVEVVKAEVGAE</sequence>
<comment type="function">
    <text evidence="1">Catalyzes the conversion of glucosamine-6-phosphate to glucosamine-1-phosphate.</text>
</comment>
<comment type="catalytic activity">
    <reaction evidence="1">
        <text>alpha-D-glucosamine 1-phosphate = D-glucosamine 6-phosphate</text>
        <dbReference type="Rhea" id="RHEA:23424"/>
        <dbReference type="ChEBI" id="CHEBI:58516"/>
        <dbReference type="ChEBI" id="CHEBI:58725"/>
        <dbReference type="EC" id="5.4.2.10"/>
    </reaction>
</comment>
<comment type="cofactor">
    <cofactor evidence="1">
        <name>Mg(2+)</name>
        <dbReference type="ChEBI" id="CHEBI:18420"/>
    </cofactor>
    <text evidence="1">Binds 1 Mg(2+) ion per subunit.</text>
</comment>
<comment type="PTM">
    <text evidence="1">Activated by phosphorylation.</text>
</comment>
<comment type="similarity">
    <text evidence="1">Belongs to the phosphohexose mutase family.</text>
</comment>
<keyword id="KW-0413">Isomerase</keyword>
<keyword id="KW-0460">Magnesium</keyword>
<keyword id="KW-0479">Metal-binding</keyword>
<keyword id="KW-0597">Phosphoprotein</keyword>
<dbReference type="EC" id="5.4.2.10" evidence="1"/>
<dbReference type="EMBL" id="CP000227">
    <property type="protein sequence ID" value="ACM10685.1"/>
    <property type="molecule type" value="Genomic_DNA"/>
</dbReference>
<dbReference type="SMR" id="B9J0F1"/>
<dbReference type="KEGG" id="bcq:BCQ_0182"/>
<dbReference type="HOGENOM" id="CLU_016950_7_0_9"/>
<dbReference type="Proteomes" id="UP000000441">
    <property type="component" value="Chromosome"/>
</dbReference>
<dbReference type="GO" id="GO:0005829">
    <property type="term" value="C:cytosol"/>
    <property type="evidence" value="ECO:0007669"/>
    <property type="project" value="TreeGrafter"/>
</dbReference>
<dbReference type="GO" id="GO:0000287">
    <property type="term" value="F:magnesium ion binding"/>
    <property type="evidence" value="ECO:0007669"/>
    <property type="project" value="UniProtKB-UniRule"/>
</dbReference>
<dbReference type="GO" id="GO:0008966">
    <property type="term" value="F:phosphoglucosamine mutase activity"/>
    <property type="evidence" value="ECO:0007669"/>
    <property type="project" value="UniProtKB-UniRule"/>
</dbReference>
<dbReference type="GO" id="GO:0004615">
    <property type="term" value="F:phosphomannomutase activity"/>
    <property type="evidence" value="ECO:0007669"/>
    <property type="project" value="TreeGrafter"/>
</dbReference>
<dbReference type="GO" id="GO:0005975">
    <property type="term" value="P:carbohydrate metabolic process"/>
    <property type="evidence" value="ECO:0007669"/>
    <property type="project" value="InterPro"/>
</dbReference>
<dbReference type="GO" id="GO:0009252">
    <property type="term" value="P:peptidoglycan biosynthetic process"/>
    <property type="evidence" value="ECO:0007669"/>
    <property type="project" value="TreeGrafter"/>
</dbReference>
<dbReference type="GO" id="GO:0006048">
    <property type="term" value="P:UDP-N-acetylglucosamine biosynthetic process"/>
    <property type="evidence" value="ECO:0007669"/>
    <property type="project" value="TreeGrafter"/>
</dbReference>
<dbReference type="CDD" id="cd05802">
    <property type="entry name" value="GlmM"/>
    <property type="match status" value="1"/>
</dbReference>
<dbReference type="FunFam" id="3.30.310.50:FF:000001">
    <property type="entry name" value="Phosphoglucosamine mutase"/>
    <property type="match status" value="1"/>
</dbReference>
<dbReference type="FunFam" id="3.40.120.10:FF:000001">
    <property type="entry name" value="Phosphoglucosamine mutase"/>
    <property type="match status" value="1"/>
</dbReference>
<dbReference type="FunFam" id="3.40.120.10:FF:000002">
    <property type="entry name" value="Phosphoglucosamine mutase"/>
    <property type="match status" value="1"/>
</dbReference>
<dbReference type="Gene3D" id="3.40.120.10">
    <property type="entry name" value="Alpha-D-Glucose-1,6-Bisphosphate, subunit A, domain 3"/>
    <property type="match status" value="3"/>
</dbReference>
<dbReference type="Gene3D" id="3.30.310.50">
    <property type="entry name" value="Alpha-D-phosphohexomutase, C-terminal domain"/>
    <property type="match status" value="1"/>
</dbReference>
<dbReference type="HAMAP" id="MF_01554_B">
    <property type="entry name" value="GlmM_B"/>
    <property type="match status" value="1"/>
</dbReference>
<dbReference type="InterPro" id="IPR005844">
    <property type="entry name" value="A-D-PHexomutase_a/b/a-I"/>
</dbReference>
<dbReference type="InterPro" id="IPR016055">
    <property type="entry name" value="A-D-PHexomutase_a/b/a-I/II/III"/>
</dbReference>
<dbReference type="InterPro" id="IPR005845">
    <property type="entry name" value="A-D-PHexomutase_a/b/a-II"/>
</dbReference>
<dbReference type="InterPro" id="IPR005846">
    <property type="entry name" value="A-D-PHexomutase_a/b/a-III"/>
</dbReference>
<dbReference type="InterPro" id="IPR005843">
    <property type="entry name" value="A-D-PHexomutase_C"/>
</dbReference>
<dbReference type="InterPro" id="IPR036900">
    <property type="entry name" value="A-D-PHexomutase_C_sf"/>
</dbReference>
<dbReference type="InterPro" id="IPR016066">
    <property type="entry name" value="A-D-PHexomutase_CS"/>
</dbReference>
<dbReference type="InterPro" id="IPR005841">
    <property type="entry name" value="Alpha-D-phosphohexomutase_SF"/>
</dbReference>
<dbReference type="InterPro" id="IPR006352">
    <property type="entry name" value="GlmM_bact"/>
</dbReference>
<dbReference type="InterPro" id="IPR050060">
    <property type="entry name" value="Phosphoglucosamine_mutase"/>
</dbReference>
<dbReference type="NCBIfam" id="TIGR01455">
    <property type="entry name" value="glmM"/>
    <property type="match status" value="1"/>
</dbReference>
<dbReference type="NCBIfam" id="NF008139">
    <property type="entry name" value="PRK10887.1"/>
    <property type="match status" value="1"/>
</dbReference>
<dbReference type="PANTHER" id="PTHR42946:SF1">
    <property type="entry name" value="PHOSPHOGLUCOMUTASE (ALPHA-D-GLUCOSE-1,6-BISPHOSPHATE-DEPENDENT)"/>
    <property type="match status" value="1"/>
</dbReference>
<dbReference type="PANTHER" id="PTHR42946">
    <property type="entry name" value="PHOSPHOHEXOSE MUTASE"/>
    <property type="match status" value="1"/>
</dbReference>
<dbReference type="Pfam" id="PF02878">
    <property type="entry name" value="PGM_PMM_I"/>
    <property type="match status" value="1"/>
</dbReference>
<dbReference type="Pfam" id="PF02879">
    <property type="entry name" value="PGM_PMM_II"/>
    <property type="match status" value="1"/>
</dbReference>
<dbReference type="Pfam" id="PF02880">
    <property type="entry name" value="PGM_PMM_III"/>
    <property type="match status" value="1"/>
</dbReference>
<dbReference type="Pfam" id="PF00408">
    <property type="entry name" value="PGM_PMM_IV"/>
    <property type="match status" value="1"/>
</dbReference>
<dbReference type="PRINTS" id="PR00509">
    <property type="entry name" value="PGMPMM"/>
</dbReference>
<dbReference type="SUPFAM" id="SSF55957">
    <property type="entry name" value="Phosphoglucomutase, C-terminal domain"/>
    <property type="match status" value="1"/>
</dbReference>
<dbReference type="SUPFAM" id="SSF53738">
    <property type="entry name" value="Phosphoglucomutase, first 3 domains"/>
    <property type="match status" value="3"/>
</dbReference>
<dbReference type="PROSITE" id="PS00710">
    <property type="entry name" value="PGM_PMM"/>
    <property type="match status" value="1"/>
</dbReference>
<proteinExistence type="inferred from homology"/>
<evidence type="ECO:0000255" key="1">
    <source>
        <dbReference type="HAMAP-Rule" id="MF_01554"/>
    </source>
</evidence>
<reference key="1">
    <citation type="journal article" date="2009" name="J. Bacteriol.">
        <title>Complete genome sequence of the extremophilic Bacillus cereus strain Q1 with industrial applications.</title>
        <authorList>
            <person name="Xiong Z."/>
            <person name="Jiang Y."/>
            <person name="Qi D."/>
            <person name="Lu H."/>
            <person name="Yang F."/>
            <person name="Yang J."/>
            <person name="Chen L."/>
            <person name="Sun L."/>
            <person name="Xu X."/>
            <person name="Xue Y."/>
            <person name="Zhu Y."/>
            <person name="Jin Q."/>
        </authorList>
    </citation>
    <scope>NUCLEOTIDE SEQUENCE [LARGE SCALE GENOMIC DNA]</scope>
    <source>
        <strain>Q1</strain>
    </source>
</reference>
<feature type="chain" id="PRO_1000185351" description="Phosphoglucosamine mutase">
    <location>
        <begin position="1"/>
        <end position="448"/>
    </location>
</feature>
<feature type="active site" description="Phosphoserine intermediate" evidence="1">
    <location>
        <position position="100"/>
    </location>
</feature>
<feature type="binding site" description="via phosphate group" evidence="1">
    <location>
        <position position="100"/>
    </location>
    <ligand>
        <name>Mg(2+)</name>
        <dbReference type="ChEBI" id="CHEBI:18420"/>
    </ligand>
</feature>
<feature type="binding site" evidence="1">
    <location>
        <position position="240"/>
    </location>
    <ligand>
        <name>Mg(2+)</name>
        <dbReference type="ChEBI" id="CHEBI:18420"/>
    </ligand>
</feature>
<feature type="binding site" evidence="1">
    <location>
        <position position="242"/>
    </location>
    <ligand>
        <name>Mg(2+)</name>
        <dbReference type="ChEBI" id="CHEBI:18420"/>
    </ligand>
</feature>
<feature type="binding site" evidence="1">
    <location>
        <position position="244"/>
    </location>
    <ligand>
        <name>Mg(2+)</name>
        <dbReference type="ChEBI" id="CHEBI:18420"/>
    </ligand>
</feature>
<feature type="modified residue" description="Phosphoserine" evidence="1">
    <location>
        <position position="100"/>
    </location>
</feature>